<feature type="chain" id="PRO_1000071064" description="Ribosome-recycling factor">
    <location>
        <begin position="1"/>
        <end position="184"/>
    </location>
</feature>
<accession>A5WGF0</accession>
<reference key="1">
    <citation type="submission" date="2007-05" db="EMBL/GenBank/DDBJ databases">
        <title>Complete sequence of chromosome of Psychrobacter sp. PRwf-1.</title>
        <authorList>
            <consortium name="US DOE Joint Genome Institute"/>
            <person name="Copeland A."/>
            <person name="Lucas S."/>
            <person name="Lapidus A."/>
            <person name="Barry K."/>
            <person name="Detter J.C."/>
            <person name="Glavina del Rio T."/>
            <person name="Hammon N."/>
            <person name="Israni S."/>
            <person name="Dalin E."/>
            <person name="Tice H."/>
            <person name="Pitluck S."/>
            <person name="Chain P."/>
            <person name="Malfatti S."/>
            <person name="Shin M."/>
            <person name="Vergez L."/>
            <person name="Schmutz J."/>
            <person name="Larimer F."/>
            <person name="Land M."/>
            <person name="Hauser L."/>
            <person name="Kyrpides N."/>
            <person name="Kim E."/>
            <person name="Tiedje J."/>
            <person name="Richardson P."/>
        </authorList>
    </citation>
    <scope>NUCLEOTIDE SEQUENCE [LARGE SCALE GENOMIC DNA]</scope>
    <source>
        <strain>PRwf-1</strain>
    </source>
</reference>
<comment type="function">
    <text evidence="1">Responsible for the release of ribosomes from messenger RNA at the termination of protein biosynthesis. May increase the efficiency of translation by recycling ribosomes from one round of translation to another.</text>
</comment>
<comment type="subcellular location">
    <subcellularLocation>
        <location evidence="1">Cytoplasm</location>
    </subcellularLocation>
</comment>
<comment type="similarity">
    <text evidence="1">Belongs to the RRF family.</text>
</comment>
<sequence length="184" mass="20854">MINDIKKDGEDRMKKTLEVLENAFSKVRTGRAHPGMLSGVMVSYYGADTPLNQVASVNVEDSRTLLVQPFERSMVQAVDKAIREADLGLNPMTADVIRVPMPALTEETRRDMQKLARGEAENSRVSIRNVRRDMLNDIKELAKEKEISEDDERRASDDIQKITDKYIASIDSKLEAKEKELMEV</sequence>
<organism>
    <name type="scientific">Psychrobacter sp. (strain PRwf-1)</name>
    <dbReference type="NCBI Taxonomy" id="349106"/>
    <lineage>
        <taxon>Bacteria</taxon>
        <taxon>Pseudomonadati</taxon>
        <taxon>Pseudomonadota</taxon>
        <taxon>Gammaproteobacteria</taxon>
        <taxon>Moraxellales</taxon>
        <taxon>Moraxellaceae</taxon>
        <taxon>Psychrobacter</taxon>
    </lineage>
</organism>
<evidence type="ECO:0000255" key="1">
    <source>
        <dbReference type="HAMAP-Rule" id="MF_00040"/>
    </source>
</evidence>
<gene>
    <name evidence="1" type="primary">frr</name>
    <name type="ordered locus">PsycPRwf_1801</name>
</gene>
<dbReference type="EMBL" id="CP000713">
    <property type="protein sequence ID" value="ABQ94741.1"/>
    <property type="molecule type" value="Genomic_DNA"/>
</dbReference>
<dbReference type="SMR" id="A5WGF0"/>
<dbReference type="STRING" id="349106.PsycPRwf_1801"/>
<dbReference type="KEGG" id="prw:PsycPRwf_1801"/>
<dbReference type="eggNOG" id="COG0233">
    <property type="taxonomic scope" value="Bacteria"/>
</dbReference>
<dbReference type="HOGENOM" id="CLU_073981_2_1_6"/>
<dbReference type="GO" id="GO:0005829">
    <property type="term" value="C:cytosol"/>
    <property type="evidence" value="ECO:0007669"/>
    <property type="project" value="GOC"/>
</dbReference>
<dbReference type="GO" id="GO:0043023">
    <property type="term" value="F:ribosomal large subunit binding"/>
    <property type="evidence" value="ECO:0007669"/>
    <property type="project" value="TreeGrafter"/>
</dbReference>
<dbReference type="GO" id="GO:0002184">
    <property type="term" value="P:cytoplasmic translational termination"/>
    <property type="evidence" value="ECO:0007669"/>
    <property type="project" value="TreeGrafter"/>
</dbReference>
<dbReference type="CDD" id="cd00520">
    <property type="entry name" value="RRF"/>
    <property type="match status" value="1"/>
</dbReference>
<dbReference type="FunFam" id="1.10.132.20:FF:000001">
    <property type="entry name" value="Ribosome-recycling factor"/>
    <property type="match status" value="1"/>
</dbReference>
<dbReference type="FunFam" id="3.30.1360.40:FF:000001">
    <property type="entry name" value="Ribosome-recycling factor"/>
    <property type="match status" value="1"/>
</dbReference>
<dbReference type="Gene3D" id="3.30.1360.40">
    <property type="match status" value="1"/>
</dbReference>
<dbReference type="Gene3D" id="1.10.132.20">
    <property type="entry name" value="Ribosome-recycling factor"/>
    <property type="match status" value="1"/>
</dbReference>
<dbReference type="HAMAP" id="MF_00040">
    <property type="entry name" value="RRF"/>
    <property type="match status" value="1"/>
</dbReference>
<dbReference type="InterPro" id="IPR002661">
    <property type="entry name" value="Ribosome_recyc_fac"/>
</dbReference>
<dbReference type="InterPro" id="IPR023584">
    <property type="entry name" value="Ribosome_recyc_fac_dom"/>
</dbReference>
<dbReference type="InterPro" id="IPR036191">
    <property type="entry name" value="RRF_sf"/>
</dbReference>
<dbReference type="NCBIfam" id="TIGR00496">
    <property type="entry name" value="frr"/>
    <property type="match status" value="1"/>
</dbReference>
<dbReference type="PANTHER" id="PTHR20982:SF3">
    <property type="entry name" value="MITOCHONDRIAL RIBOSOME RECYCLING FACTOR PSEUDO 1"/>
    <property type="match status" value="1"/>
</dbReference>
<dbReference type="PANTHER" id="PTHR20982">
    <property type="entry name" value="RIBOSOME RECYCLING FACTOR"/>
    <property type="match status" value="1"/>
</dbReference>
<dbReference type="Pfam" id="PF01765">
    <property type="entry name" value="RRF"/>
    <property type="match status" value="1"/>
</dbReference>
<dbReference type="SUPFAM" id="SSF55194">
    <property type="entry name" value="Ribosome recycling factor, RRF"/>
    <property type="match status" value="1"/>
</dbReference>
<keyword id="KW-0963">Cytoplasm</keyword>
<keyword id="KW-0648">Protein biosynthesis</keyword>
<proteinExistence type="inferred from homology"/>
<protein>
    <recommendedName>
        <fullName evidence="1">Ribosome-recycling factor</fullName>
        <shortName evidence="1">RRF</shortName>
    </recommendedName>
    <alternativeName>
        <fullName evidence="1">Ribosome-releasing factor</fullName>
    </alternativeName>
</protein>
<name>RRF_PSYWF</name>